<gene>
    <name type="primary">ppsC</name>
    <name type="ordered locus">Rv2933</name>
</gene>
<protein>
    <recommendedName>
        <fullName evidence="12">Phenolphthiocerol/phthiocerol polyketide synthase subunit C</fullName>
        <ecNumber evidence="6 13">2.3.1.292</ecNumber>
    </recommendedName>
    <alternativeName>
        <fullName>(Phenol)carboxyphthiodiolenone synthase subunit C</fullName>
    </alternativeName>
    <alternativeName>
        <fullName>Beta-ketoacyl-acyl-carrier-protein synthase I</fullName>
    </alternativeName>
    <alternativeName>
        <fullName>Phthiocerol synthesis polyketide synthase type I PpsC</fullName>
    </alternativeName>
</protein>
<name>PPSC_MYCTU</name>
<dbReference type="EC" id="2.3.1.292" evidence="6 13"/>
<dbReference type="EMBL" id="AL123456">
    <property type="protein sequence ID" value="CCP45736.1"/>
    <property type="molecule type" value="Genomic_DNA"/>
</dbReference>
<dbReference type="PIR" id="A70984">
    <property type="entry name" value="A70984"/>
</dbReference>
<dbReference type="RefSeq" id="NP_217449.1">
    <property type="nucleotide sequence ID" value="NC_000962.3"/>
</dbReference>
<dbReference type="RefSeq" id="WP_003414837.1">
    <property type="nucleotide sequence ID" value="NZ_KK339370.1"/>
</dbReference>
<dbReference type="PDB" id="1PQW">
    <property type="method" value="X-ray"/>
    <property type="resolution" value="2.66 A"/>
    <property type="chains" value="A/B=1559-1755"/>
</dbReference>
<dbReference type="PDB" id="4OKI">
    <property type="method" value="X-ray"/>
    <property type="resolution" value="1.50 A"/>
    <property type="chains" value="A/B=1558-1750"/>
</dbReference>
<dbReference type="PDB" id="4OOC">
    <property type="method" value="X-ray"/>
    <property type="resolution" value="2.70 A"/>
    <property type="chains" value="A=921-1222"/>
</dbReference>
<dbReference type="PDB" id="5I0K">
    <property type="method" value="X-ray"/>
    <property type="resolution" value="3.20 A"/>
    <property type="chains" value="A=921-1217"/>
</dbReference>
<dbReference type="PDB" id="5L84">
    <property type="method" value="X-ray"/>
    <property type="resolution" value="2.90 A"/>
    <property type="chains" value="A=921-1222"/>
</dbReference>
<dbReference type="PDB" id="5NJI">
    <property type="method" value="X-ray"/>
    <property type="resolution" value="1.60 A"/>
    <property type="chains" value="A=921-1222"/>
</dbReference>
<dbReference type="PDB" id="6RCX">
    <property type="method" value="X-ray"/>
    <property type="resolution" value="2.00 A"/>
    <property type="chains" value="B=2057-2188"/>
</dbReference>
<dbReference type="PDB" id="7AHB">
    <property type="method" value="X-ray"/>
    <property type="resolution" value="1.90 A"/>
    <property type="chains" value="A/B=546-876"/>
</dbReference>
<dbReference type="PDB" id="7BDW">
    <property type="method" value="X-ray"/>
    <property type="resolution" value="2.55 A"/>
    <property type="chains" value="B=2060-2188"/>
</dbReference>
<dbReference type="PDB" id="8QZI">
    <property type="method" value="X-ray"/>
    <property type="resolution" value="2.50 A"/>
    <property type="chains" value="E/F=2042-2188"/>
</dbReference>
<dbReference type="PDBsum" id="1PQW"/>
<dbReference type="PDBsum" id="4OKI"/>
<dbReference type="PDBsum" id="4OOC"/>
<dbReference type="PDBsum" id="5I0K"/>
<dbReference type="PDBsum" id="5L84"/>
<dbReference type="PDBsum" id="5NJI"/>
<dbReference type="PDBsum" id="6RCX"/>
<dbReference type="PDBsum" id="7AHB"/>
<dbReference type="PDBsum" id="7BDW"/>
<dbReference type="PDBsum" id="8QZI"/>
<dbReference type="SMR" id="P96202"/>
<dbReference type="FunCoup" id="P96202">
    <property type="interactions" value="21"/>
</dbReference>
<dbReference type="STRING" id="83332.Rv2933"/>
<dbReference type="iPTMnet" id="P96202"/>
<dbReference type="PaxDb" id="83332-Rv2933"/>
<dbReference type="GeneID" id="887686"/>
<dbReference type="KEGG" id="mtu:Rv2933"/>
<dbReference type="KEGG" id="mtv:RVBD_2933"/>
<dbReference type="PATRIC" id="fig|83332.111.peg.3263"/>
<dbReference type="TubercuList" id="Rv2933"/>
<dbReference type="eggNOG" id="COG0604">
    <property type="taxonomic scope" value="Bacteria"/>
</dbReference>
<dbReference type="eggNOG" id="COG1028">
    <property type="taxonomic scope" value="Bacteria"/>
</dbReference>
<dbReference type="eggNOG" id="COG3321">
    <property type="taxonomic scope" value="Bacteria"/>
</dbReference>
<dbReference type="InParanoid" id="P96202"/>
<dbReference type="OrthoDB" id="9778690at2"/>
<dbReference type="PhylomeDB" id="P96202"/>
<dbReference type="UniPathway" id="UPA00094"/>
<dbReference type="EvolutionaryTrace" id="P96202"/>
<dbReference type="Proteomes" id="UP000001584">
    <property type="component" value="Chromosome"/>
</dbReference>
<dbReference type="GO" id="GO:0005737">
    <property type="term" value="C:cytoplasm"/>
    <property type="evidence" value="ECO:0000318"/>
    <property type="project" value="GO_Central"/>
</dbReference>
<dbReference type="GO" id="GO:0005829">
    <property type="term" value="C:cytosol"/>
    <property type="evidence" value="ECO:0007005"/>
    <property type="project" value="MTBBASE"/>
</dbReference>
<dbReference type="GO" id="GO:0005886">
    <property type="term" value="C:plasma membrane"/>
    <property type="evidence" value="ECO:0007005"/>
    <property type="project" value="MTBBASE"/>
</dbReference>
<dbReference type="GO" id="GO:0034081">
    <property type="term" value="C:polyketide synthase complex"/>
    <property type="evidence" value="ECO:0000250"/>
    <property type="project" value="UniProtKB"/>
</dbReference>
<dbReference type="GO" id="GO:0004315">
    <property type="term" value="F:3-oxoacyl-[acyl-carrier-protein] synthase activity"/>
    <property type="evidence" value="ECO:0007669"/>
    <property type="project" value="InterPro"/>
</dbReference>
<dbReference type="GO" id="GO:0004312">
    <property type="term" value="F:fatty acid synthase activity"/>
    <property type="evidence" value="ECO:0000318"/>
    <property type="project" value="GO_Central"/>
</dbReference>
<dbReference type="GO" id="GO:0016491">
    <property type="term" value="F:oxidoreductase activity"/>
    <property type="evidence" value="ECO:0007669"/>
    <property type="project" value="UniProtKB-KW"/>
</dbReference>
<dbReference type="GO" id="GO:0031177">
    <property type="term" value="F:phosphopantetheine binding"/>
    <property type="evidence" value="ECO:0007669"/>
    <property type="project" value="InterPro"/>
</dbReference>
<dbReference type="GO" id="GO:0071766">
    <property type="term" value="P:Actinobacterium-type cell wall biogenesis"/>
    <property type="evidence" value="ECO:0000250"/>
    <property type="project" value="UniProtKB"/>
</dbReference>
<dbReference type="GO" id="GO:0071770">
    <property type="term" value="P:DIM/DIP cell wall layer assembly"/>
    <property type="evidence" value="ECO:0000314"/>
    <property type="project" value="MTBBASE"/>
</dbReference>
<dbReference type="GO" id="GO:0006633">
    <property type="term" value="P:fatty acid biosynthetic process"/>
    <property type="evidence" value="ECO:0000314"/>
    <property type="project" value="MTBBASE"/>
</dbReference>
<dbReference type="GO" id="GO:0097041">
    <property type="term" value="P:phenolic phthiocerol biosynthetic process"/>
    <property type="evidence" value="ECO:0000250"/>
    <property type="project" value="UniProtKB"/>
</dbReference>
<dbReference type="GO" id="GO:0097040">
    <property type="term" value="P:phthiocerol biosynthetic process"/>
    <property type="evidence" value="ECO:0000250"/>
    <property type="project" value="UniProtKB"/>
</dbReference>
<dbReference type="CDD" id="cd05195">
    <property type="entry name" value="enoyl_red"/>
    <property type="match status" value="1"/>
</dbReference>
<dbReference type="CDD" id="cd00833">
    <property type="entry name" value="PKS"/>
    <property type="match status" value="1"/>
</dbReference>
<dbReference type="FunFam" id="3.10.129.110:FF:000007">
    <property type="entry name" value="Phthiocerol synthesis polyketide synthase type I PpsC"/>
    <property type="match status" value="1"/>
</dbReference>
<dbReference type="FunFam" id="3.30.70.250:FF:000003">
    <property type="entry name" value="Polyketide beta-ketoacyl synthase Pks3"/>
    <property type="match status" value="1"/>
</dbReference>
<dbReference type="FunFam" id="3.40.50.720:FF:000209">
    <property type="entry name" value="Polyketide synthase Pks12"/>
    <property type="match status" value="1"/>
</dbReference>
<dbReference type="FunFam" id="3.40.47.10:FF:000019">
    <property type="entry name" value="Polyketide synthase type I"/>
    <property type="match status" value="1"/>
</dbReference>
<dbReference type="Gene3D" id="3.40.47.10">
    <property type="match status" value="1"/>
</dbReference>
<dbReference type="Gene3D" id="1.10.1200.10">
    <property type="entry name" value="ACP-like"/>
    <property type="match status" value="1"/>
</dbReference>
<dbReference type="Gene3D" id="3.30.70.250">
    <property type="entry name" value="Malonyl-CoA ACP transacylase, ACP-binding"/>
    <property type="match status" value="1"/>
</dbReference>
<dbReference type="Gene3D" id="3.40.366.10">
    <property type="entry name" value="Malonyl-Coenzyme A Acyl Carrier Protein, domain 2"/>
    <property type="match status" value="1"/>
</dbReference>
<dbReference type="Gene3D" id="3.90.180.10">
    <property type="entry name" value="Medium-chain alcohol dehydrogenases, catalytic domain"/>
    <property type="match status" value="1"/>
</dbReference>
<dbReference type="Gene3D" id="3.40.50.720">
    <property type="entry name" value="NAD(P)-binding Rossmann-like Domain"/>
    <property type="match status" value="3"/>
</dbReference>
<dbReference type="Gene3D" id="3.10.129.110">
    <property type="entry name" value="Polyketide synthase dehydratase"/>
    <property type="match status" value="1"/>
</dbReference>
<dbReference type="InterPro" id="IPR001227">
    <property type="entry name" value="Ac_transferase_dom_sf"/>
</dbReference>
<dbReference type="InterPro" id="IPR036736">
    <property type="entry name" value="ACP-like_sf"/>
</dbReference>
<dbReference type="InterPro" id="IPR014043">
    <property type="entry name" value="Acyl_transferase_dom"/>
</dbReference>
<dbReference type="InterPro" id="IPR016035">
    <property type="entry name" value="Acyl_Trfase/lysoPLipase"/>
</dbReference>
<dbReference type="InterPro" id="IPR013154">
    <property type="entry name" value="ADH-like_N"/>
</dbReference>
<dbReference type="InterPro" id="IPR011032">
    <property type="entry name" value="GroES-like_sf"/>
</dbReference>
<dbReference type="InterPro" id="IPR018201">
    <property type="entry name" value="Ketoacyl_synth_AS"/>
</dbReference>
<dbReference type="InterPro" id="IPR014031">
    <property type="entry name" value="Ketoacyl_synth_C"/>
</dbReference>
<dbReference type="InterPro" id="IPR014030">
    <property type="entry name" value="Ketoacyl_synth_N"/>
</dbReference>
<dbReference type="InterPro" id="IPR016036">
    <property type="entry name" value="Malonyl_transacylase_ACP-bd"/>
</dbReference>
<dbReference type="InterPro" id="IPR036291">
    <property type="entry name" value="NAD(P)-bd_dom_sf"/>
</dbReference>
<dbReference type="InterPro" id="IPR020841">
    <property type="entry name" value="PKS_Beta-ketoAc_synthase_dom"/>
</dbReference>
<dbReference type="InterPro" id="IPR042104">
    <property type="entry name" value="PKS_dehydratase_sf"/>
</dbReference>
<dbReference type="InterPro" id="IPR020807">
    <property type="entry name" value="PKS_DH"/>
</dbReference>
<dbReference type="InterPro" id="IPR049551">
    <property type="entry name" value="PKS_DH_C"/>
</dbReference>
<dbReference type="InterPro" id="IPR049552">
    <property type="entry name" value="PKS_DH_N"/>
</dbReference>
<dbReference type="InterPro" id="IPR020843">
    <property type="entry name" value="PKS_ER"/>
</dbReference>
<dbReference type="InterPro" id="IPR013968">
    <property type="entry name" value="PKS_KR"/>
</dbReference>
<dbReference type="InterPro" id="IPR049900">
    <property type="entry name" value="PKS_mFAS_DH"/>
</dbReference>
<dbReference type="InterPro" id="IPR050091">
    <property type="entry name" value="PKS_NRPS_Biosynth_Enz"/>
</dbReference>
<dbReference type="InterPro" id="IPR020806">
    <property type="entry name" value="PKS_PP-bd"/>
</dbReference>
<dbReference type="InterPro" id="IPR009081">
    <property type="entry name" value="PP-bd_ACP"/>
</dbReference>
<dbReference type="InterPro" id="IPR006162">
    <property type="entry name" value="Ppantetheine_attach_site"/>
</dbReference>
<dbReference type="InterPro" id="IPR016039">
    <property type="entry name" value="Thiolase-like"/>
</dbReference>
<dbReference type="PANTHER" id="PTHR43775">
    <property type="entry name" value="FATTY ACID SYNTHASE"/>
    <property type="match status" value="1"/>
</dbReference>
<dbReference type="PANTHER" id="PTHR43775:SF37">
    <property type="entry name" value="SI:DKEY-61P9.11"/>
    <property type="match status" value="1"/>
</dbReference>
<dbReference type="Pfam" id="PF00698">
    <property type="entry name" value="Acyl_transf_1"/>
    <property type="match status" value="1"/>
</dbReference>
<dbReference type="Pfam" id="PF08240">
    <property type="entry name" value="ADH_N"/>
    <property type="match status" value="1"/>
</dbReference>
<dbReference type="Pfam" id="PF13602">
    <property type="entry name" value="ADH_zinc_N_2"/>
    <property type="match status" value="1"/>
</dbReference>
<dbReference type="Pfam" id="PF00109">
    <property type="entry name" value="ketoacyl-synt"/>
    <property type="match status" value="1"/>
</dbReference>
<dbReference type="Pfam" id="PF02801">
    <property type="entry name" value="Ketoacyl-synt_C"/>
    <property type="match status" value="1"/>
</dbReference>
<dbReference type="Pfam" id="PF08659">
    <property type="entry name" value="KR"/>
    <property type="match status" value="1"/>
</dbReference>
<dbReference type="Pfam" id="PF21089">
    <property type="entry name" value="PKS_DH_N"/>
    <property type="match status" value="1"/>
</dbReference>
<dbReference type="Pfam" id="PF00550">
    <property type="entry name" value="PP-binding"/>
    <property type="match status" value="1"/>
</dbReference>
<dbReference type="Pfam" id="PF14765">
    <property type="entry name" value="PS-DH"/>
    <property type="match status" value="1"/>
</dbReference>
<dbReference type="SMART" id="SM00827">
    <property type="entry name" value="PKS_AT"/>
    <property type="match status" value="1"/>
</dbReference>
<dbReference type="SMART" id="SM00826">
    <property type="entry name" value="PKS_DH"/>
    <property type="match status" value="1"/>
</dbReference>
<dbReference type="SMART" id="SM00829">
    <property type="entry name" value="PKS_ER"/>
    <property type="match status" value="1"/>
</dbReference>
<dbReference type="SMART" id="SM00822">
    <property type="entry name" value="PKS_KR"/>
    <property type="match status" value="1"/>
</dbReference>
<dbReference type="SMART" id="SM00825">
    <property type="entry name" value="PKS_KS"/>
    <property type="match status" value="1"/>
</dbReference>
<dbReference type="SMART" id="SM00823">
    <property type="entry name" value="PKS_PP"/>
    <property type="match status" value="1"/>
</dbReference>
<dbReference type="SUPFAM" id="SSF47336">
    <property type="entry name" value="ACP-like"/>
    <property type="match status" value="1"/>
</dbReference>
<dbReference type="SUPFAM" id="SSF52151">
    <property type="entry name" value="FabD/lysophospholipase-like"/>
    <property type="match status" value="1"/>
</dbReference>
<dbReference type="SUPFAM" id="SSF50129">
    <property type="entry name" value="GroES-like"/>
    <property type="match status" value="1"/>
</dbReference>
<dbReference type="SUPFAM" id="SSF51735">
    <property type="entry name" value="NAD(P)-binding Rossmann-fold domains"/>
    <property type="match status" value="3"/>
</dbReference>
<dbReference type="SUPFAM" id="SSF55048">
    <property type="entry name" value="Probable ACP-binding domain of malonyl-CoA ACP transacylase"/>
    <property type="match status" value="1"/>
</dbReference>
<dbReference type="SUPFAM" id="SSF53901">
    <property type="entry name" value="Thiolase-like"/>
    <property type="match status" value="1"/>
</dbReference>
<dbReference type="PROSITE" id="PS50075">
    <property type="entry name" value="CARRIER"/>
    <property type="match status" value="1"/>
</dbReference>
<dbReference type="PROSITE" id="PS00606">
    <property type="entry name" value="KS3_1"/>
    <property type="match status" value="1"/>
</dbReference>
<dbReference type="PROSITE" id="PS52004">
    <property type="entry name" value="KS3_2"/>
    <property type="match status" value="1"/>
</dbReference>
<dbReference type="PROSITE" id="PS00012">
    <property type="entry name" value="PHOSPHOPANTETHEINE"/>
    <property type="match status" value="1"/>
</dbReference>
<dbReference type="PROSITE" id="PS52019">
    <property type="entry name" value="PKS_MFAS_DH"/>
    <property type="match status" value="1"/>
</dbReference>
<reference key="1">
    <citation type="journal article" date="1998" name="Nature">
        <title>Deciphering the biology of Mycobacterium tuberculosis from the complete genome sequence.</title>
        <authorList>
            <person name="Cole S.T."/>
            <person name="Brosch R."/>
            <person name="Parkhill J."/>
            <person name="Garnier T."/>
            <person name="Churcher C.M."/>
            <person name="Harris D.E."/>
            <person name="Gordon S.V."/>
            <person name="Eiglmeier K."/>
            <person name="Gas S."/>
            <person name="Barry C.E. III"/>
            <person name="Tekaia F."/>
            <person name="Badcock K."/>
            <person name="Basham D."/>
            <person name="Brown D."/>
            <person name="Chillingworth T."/>
            <person name="Connor R."/>
            <person name="Davies R.M."/>
            <person name="Devlin K."/>
            <person name="Feltwell T."/>
            <person name="Gentles S."/>
            <person name="Hamlin N."/>
            <person name="Holroyd S."/>
            <person name="Hornsby T."/>
            <person name="Jagels K."/>
            <person name="Krogh A."/>
            <person name="McLean J."/>
            <person name="Moule S."/>
            <person name="Murphy L.D."/>
            <person name="Oliver S."/>
            <person name="Osborne J."/>
            <person name="Quail M.A."/>
            <person name="Rajandream M.A."/>
            <person name="Rogers J."/>
            <person name="Rutter S."/>
            <person name="Seeger K."/>
            <person name="Skelton S."/>
            <person name="Squares S."/>
            <person name="Squares R."/>
            <person name="Sulston J.E."/>
            <person name="Taylor K."/>
            <person name="Whitehead S."/>
            <person name="Barrell B.G."/>
        </authorList>
    </citation>
    <scope>NUCLEOTIDE SEQUENCE [LARGE SCALE GENOMIC DNA]</scope>
    <source>
        <strain>ATCC 25618 / H37Rv</strain>
    </source>
</reference>
<reference key="2">
    <citation type="journal article" date="2005" name="Mol. Cell">
        <title>Dissecting the mechanism and assembly of a complex virulence mycobacterial lipid.</title>
        <authorList>
            <person name="Trivedi O.A."/>
            <person name="Arora P."/>
            <person name="Vats A."/>
            <person name="Ansari M.Z."/>
            <person name="Tickoo R."/>
            <person name="Sridharan V."/>
            <person name="Mohanty D."/>
            <person name="Gokhale R.S."/>
        </authorList>
    </citation>
    <scope>FUNCTION</scope>
    <scope>CATALYTIC ACTIVITY</scope>
    <scope>COFACTOR</scope>
    <scope>PATHWAY</scope>
</reference>
<reference key="3">
    <citation type="journal article" date="2008" name="BMC Syst. Biol.">
        <title>targetTB: a target identification pipeline for Mycobacterium tuberculosis through an interactome, reactome and genome-scale structural analysis.</title>
        <authorList>
            <person name="Raman K."/>
            <person name="Yeturu K."/>
            <person name="Chandra N."/>
        </authorList>
    </citation>
    <scope>IDENTIFICATION AS A DRUG TARGET [LARGE SCALE ANALYSIS]</scope>
</reference>
<reference key="4">
    <citation type="journal article" date="2010" name="FEBS J.">
        <title>Delineation of the roles of FadD22, FadD26 and FadD29 in the biosynthesis of phthiocerol dimycocerosates and related compounds in Mycobacterium tuberculosis.</title>
        <authorList>
            <person name="Simeone R."/>
            <person name="Leger M."/>
            <person name="Constant P."/>
            <person name="Malaga W."/>
            <person name="Marrakchi H."/>
            <person name="Daffe M."/>
            <person name="Guilhot C."/>
            <person name="Chalut C."/>
        </authorList>
    </citation>
    <scope>FUNCTION</scope>
    <scope>CATALYTIC ACTIVITY</scope>
</reference>
<reference key="5">
    <citation type="journal article" date="2011" name="Mol. Cell. Proteomics">
        <title>Proteogenomic analysis of Mycobacterium tuberculosis by high resolution mass spectrometry.</title>
        <authorList>
            <person name="Kelkar D.S."/>
            <person name="Kumar D."/>
            <person name="Kumar P."/>
            <person name="Balakrishnan L."/>
            <person name="Muthusamy B."/>
            <person name="Yadav A.K."/>
            <person name="Shrivastava P."/>
            <person name="Marimuthu A."/>
            <person name="Anand S."/>
            <person name="Sundaram H."/>
            <person name="Kingsbury R."/>
            <person name="Harsha H.C."/>
            <person name="Nair B."/>
            <person name="Prasad T.S."/>
            <person name="Chauhan D.S."/>
            <person name="Katoch K."/>
            <person name="Katoch V.M."/>
            <person name="Kumar P."/>
            <person name="Chaerkady R."/>
            <person name="Ramachandran S."/>
            <person name="Dash D."/>
            <person name="Pandey A."/>
        </authorList>
    </citation>
    <scope>ACETYLATION [LARGE SCALE ANALYSIS] AT THR-2</scope>
    <scope>CLEAVAGE OF INITIATOR METHIONINE [LARGE SCALE ANALYSIS]</scope>
    <scope>IDENTIFICATION BY MASS SPECTROMETRY [LARGE SCALE ANALYSIS]</scope>
    <source>
        <strain>ATCC 25618 / H37Rv</strain>
    </source>
</reference>
<reference key="6">
    <citation type="journal article" date="2016" name="FEBS Open Bio">
        <title>Mass spectral determination of phosphopantetheinylation specificity for carrier proteins in Mycobacterium tuberculosis.</title>
        <authorList>
            <person name="Jung J."/>
            <person name="Bashiri G."/>
            <person name="Johnston J.M."/>
            <person name="Baker E.N."/>
        </authorList>
    </citation>
    <scope>PHOSPHOPANTETHEINYLATION AT SER-2105</scope>
    <scope>MUTAGENESIS OF SER-2105</scope>
</reference>
<reference evidence="16" key="7">
    <citation type="submission" date="2003-06" db="PDB data bank">
        <title>Putative enoyl reductase domain of polyketide synthase.</title>
        <authorList>
            <person name="Gogos A."/>
            <person name="Mu H."/>
            <person name="Shapiro L."/>
        </authorList>
    </citation>
    <scope>X-RAY CRYSTALLOGRAPHY (2.66 ANGSTROMS) OF 1559-1755</scope>
    <scope>SUBUNIT</scope>
    <source>
        <strain>ATCC 25618 / H37Rv</strain>
    </source>
</reference>
<reference evidence="17 18" key="8">
    <citation type="submission" date="2014-01" db="PDB data bank">
        <title>Insights into the catalytic mechanism of the DH domain of the Mycobacterium tuberculosis polyketide synthase PpsC and architecture of the beta-carbon processing domains.</title>
        <authorList>
            <person name="Faille A."/>
            <person name="Slama N."/>
            <person name="Quemard A."/>
            <person name="Mourey L."/>
            <person name="Pedelacq J.D."/>
        </authorList>
    </citation>
    <scope>X-RAY CRYSTALLOGRAPHY (1.50 ANGSTROMS) OF 1558-1750</scope>
</reference>
<reference evidence="19 20 21" key="9">
    <citation type="journal article" date="2017" name="J. Mol. Biol.">
        <title>Insights into substrate modification by dehydratases from type I polyketide synthases.</title>
        <authorList>
            <person name="Faille A."/>
            <person name="Gavalda S."/>
            <person name="Slama N."/>
            <person name="Lherbet C."/>
            <person name="Maveyraud L."/>
            <person name="Guillet V."/>
            <person name="Laval F."/>
            <person name="Quemard A."/>
            <person name="Mourey L."/>
            <person name="Pedelacq J.D."/>
        </authorList>
    </citation>
    <scope>X-RAY CRYSTALLOGRAPHY (1.60 ANGSTROMS) OF 921-1217 OF APOENZYME AND IN COMPLEXES WITH TRANS-BUT-2-ENOYL-COA AND TRANS-DODEC-2-ENOYL-COA DERIVATIVES</scope>
    <scope>ACTIVE SITE</scope>
    <scope>MUTAGENESIS OF HIS-959</scope>
</reference>
<sequence>MTAATPDRRAIITEALHKIDDLTARLEIAEKSSSEPIAVIGMGCRFPGGVNNPEQFWDLLCAGRSGIVRVPAQRWDADAYYCDDHTVPGTICSTEGGFLTSWQPDEFDAEFFSISPREAAAMDPQQRLLIEVAWEALEDAGVPQHTIRGTQTSVFVGVTAYDYMLTLAGRLRPVDLDAYIPTGNSANFAAGRLAYILGARGPAVVIDTACSSSLVAVHLACQSLRGRESDMALVGGTNLLLSPGPSIACSRWGMLSPEGRCKTFDASADGYVRGEGAAVVVLKRLDDAVRDGNRILAVVRGSAVNQDGASSGVTVPNGPAQQALLAKALTSSKLTAADIDYVEAHGTGTPLGDPIELDSLSKVFSDRAGSDQLVIGSVKTNLGHLEAAAGVAGLMKAVLAVHNGYIPRHLNFHQLTPHASEAASRLRIAADGIDWPTTGRPRRAGVSSFGVSGTNAHVVIEQAPDPMAAAGTEPQRGPVPAVSTLVVFGKTAPRVAATASVLADWLDGPGAAVPLADVAHTLNHHRARQTRFGTVAAVDRRQAVIGLRALAAGQSAPGVVAPREGSIGGGTVFVYSGRGSQWAGMGRQLLADEPAFAAAIAELEPEFVAQGGFSLRDVIAGGKELVGIEQIQLGLIGMQLALTALWRSYGVTPDAVIGHSMGEVAAAVVAGALTPAQGLRVTAVRSRLMAPLSGQGTMALLELDAEATEALIADYPEVSLGIYASPRQTVISGPPLLIDELIDKVRQQNGFATRVNIEVAPHNPAMDALQPAMRSELADLTPQPPTIPIISTTYADLGISLGSGPRFDAEHWATNMRNPVRFHQAIAHAGADHHTFIEISAHPLLTHSISDTLRASYDVDNYLSIGTLQRDAHDTLEFHTNLNTTHTTHPPQTPHPPEPHPVLPTTPWQHTQHWITATSAAYHRPDTHPLLGVGVTDPTNGTRVWESELDPDLLWLADHVIDDLVVLPGAAYAEIALAAATDTFAVEQDQPWMISELDLRQMLHVTPGTVLVTTLTGDEQRCQVEIRTRSGSSGWTTHATATVARAEPLAPLDHEGQRREVTTADLEDQLDPDDLYQRLRGAGQQHGPAFQGIVGLAVTQAGVARAQVRLPASARTGSREFMLHPVMMDIALQTLGATRTATDLAGGQDARQGPSSNSALVVPVRFAGVHVYGDITRGVRAVGSLAAAGDRLVGEVVLTDANGQPLLVVDEVEMAVLGSGSGATELTNRLFMLEWEPAPLEKTAEATGALLLIGDPAAGDPLLPALQSSLRDRITDLELASAADEATLRAAISRTSWDGIVVVCPPRANDESMPDEAQLELARTRTLLVASVVETVTRMGARKSPRLWIVTRGAAQFDAGESVTLAQTGLRGIARVLTFEHSELNTTLVDIEPDGTGSLAALAEELLAGSEADEVALRDGQRYVNRLVPAPTTTSGDLAAEARHQVVNLDSSGASRAAVRLQIDQPGRLDALNVHEVKRGRPQGDQVEVRVVAAGLNFSDVLKAMGVYPGLDGAAPVIGGECVGYVTAIGDEVDGVEVGQRVIAFGPGTFGTHLGTIADLVVPIPDTLADNEAATFGVAYLTAWHSLCEVGRLSPGERVLIHSATGGVGMAAVSIAKMIGARIYTTAGSDAKREMLSRLGVEYVGDSRSVDFADEILELTDGYGVDVVLNSLAGEAIQRGVQILAPGGRFIELGKKDVYADASLGLAALAKSASFSVVDLDLNLKLQPARYRQLLQHILQHVADGKLEVLPVTAFSLHDAADAFRLMASGKHTGKIVISIPQHGSIEAIAAPPPLPLVSRDGGYLIVGGMGGLGFVVARWLAEQGAGLIVLNGRSAPSDEVAAAIAELNASGSRIEVITGDITEPDTAERLVRAVEDAGFRLAGVVHSAMVLADEIVLNMTDSAARRVFAPKVTGSWRLHVATAARDVDWWLTFSSAAALLGTPGQGAYAAANSWVDGLVAHRRSAGLPAVGINWGPWADVGRAQFFKDLGVEMINAEQGLAAMQAVLTADRGRTGVFSLDARQWFQSFPAVAGSSLFAKLHDSAARKSGQRRGGGAIRAQLDALDAAERPGHLASAIADEIRAVLRSGDPIDHHRPLETLGLDSLMGLELRNRLEASLGITLPVALVWAYPTISDLATALCERMDYATPAAAQEISDTEPELSDEEMDLLADLVDASELEAATRGES</sequence>
<proteinExistence type="evidence at protein level"/>
<keyword id="KW-0002">3D-structure</keyword>
<keyword id="KW-0007">Acetylation</keyword>
<keyword id="KW-0276">Fatty acid metabolism</keyword>
<keyword id="KW-0443">Lipid metabolism</keyword>
<keyword id="KW-0511">Multifunctional enzyme</keyword>
<keyword id="KW-0521">NADP</keyword>
<keyword id="KW-0560">Oxidoreductase</keyword>
<keyword id="KW-0596">Phosphopantetheine</keyword>
<keyword id="KW-0597">Phosphoprotein</keyword>
<keyword id="KW-1185">Reference proteome</keyword>
<keyword id="KW-0808">Transferase</keyword>
<comment type="function">
    <text evidence="6 8">Part of the PpsABCDE complex involved in the biosynthesis of the lipid core common to phthiocerols and phenolphthiocerols by successive additions of malonyl-CoA or methylmalonyl-CoA extender units (PubMed:15749014, PubMed:20553505). PpsA can accept as substrate the activated forms of either icosanoyl (C20), docosanoyl (C22) or lignoceroyl (C24) groups from FadD26, or a (4-hydroxyphenyl)-C17 or (4-hydroxyphenyl)-C19 fatty acyl from FadD29 (PubMed:15749014, PubMed:20553505). PpsA initiates the biosynthesis and extends its substrate using a malonyl-CoA extender unit. The PpsB and PpsC proteins add the second and third malonyl-CoA extender units. PpsD adds an (R)-methylmalonyl unit and PpsE adds a second (R)-methylmalonyl unit. The incorporation of the methylmalonyl units results in formation of two branched methyl groups in the elongated product (PubMed:15749014).</text>
</comment>
<comment type="catalytic activity">
    <reaction evidence="6 13">
        <text>icosanoyl-[(phenol)carboxyphthiodiolenone synthase] + 2 (S)-methylmalonyl-CoA + 3 malonyl-CoA + 5 NADPH + 10 H(+) = C32-carboxyphthiodiolenone-[(phenol)carboxyphthiodiolenone synthase] + 5 CO2 + 5 NADP(+) + 5 CoA + 2 H2O</text>
        <dbReference type="Rhea" id="RHEA:57748"/>
        <dbReference type="Rhea" id="RHEA-COMP:14985"/>
        <dbReference type="Rhea" id="RHEA-COMP:14986"/>
        <dbReference type="ChEBI" id="CHEBI:15377"/>
        <dbReference type="ChEBI" id="CHEBI:15378"/>
        <dbReference type="ChEBI" id="CHEBI:16526"/>
        <dbReference type="ChEBI" id="CHEBI:57287"/>
        <dbReference type="ChEBI" id="CHEBI:57327"/>
        <dbReference type="ChEBI" id="CHEBI:57384"/>
        <dbReference type="ChEBI" id="CHEBI:57783"/>
        <dbReference type="ChEBI" id="CHEBI:58349"/>
        <dbReference type="ChEBI" id="CHEBI:87848"/>
        <dbReference type="ChEBI" id="CHEBI:142236"/>
        <dbReference type="EC" id="2.3.1.292"/>
    </reaction>
</comment>
<comment type="catalytic activity">
    <reaction evidence="6 13">
        <text>docosanoyl-[(phenol)carboxyphthiodiolenone synthase] + 2 (S)-methylmalonyl-CoA + 3 malonyl-CoA + 5 NADPH + 10 H(+) = C34-carboxyphthiodiolenone-[(phenol)carboxyphthiodiolenone synthase] + 5 CO2 + 5 NADP(+) + 5 CoA + 2 H2O</text>
        <dbReference type="Rhea" id="RHEA:57752"/>
        <dbReference type="Rhea" id="RHEA-COMP:14987"/>
        <dbReference type="Rhea" id="RHEA-COMP:14988"/>
        <dbReference type="ChEBI" id="CHEBI:15377"/>
        <dbReference type="ChEBI" id="CHEBI:15378"/>
        <dbReference type="ChEBI" id="CHEBI:16526"/>
        <dbReference type="ChEBI" id="CHEBI:57287"/>
        <dbReference type="ChEBI" id="CHEBI:57327"/>
        <dbReference type="ChEBI" id="CHEBI:57384"/>
        <dbReference type="ChEBI" id="CHEBI:57783"/>
        <dbReference type="ChEBI" id="CHEBI:58349"/>
        <dbReference type="ChEBI" id="CHEBI:142237"/>
        <dbReference type="ChEBI" id="CHEBI:142238"/>
        <dbReference type="EC" id="2.3.1.292"/>
    </reaction>
</comment>
<comment type="catalytic activity">
    <reaction evidence="6 13">
        <text>17-(4-hydroxyphenyl)heptadecanoyl-[(phenol)carboxyphthiodiolenone synthase] + 2 (S)-methylmalonyl-CoA + 3 malonyl-CoA + 5 NADPH + 10 H(+) = C35-(phenol)carboxyphthiodiolenone-[(phenol)carboxyphthiodiolenone synthase] + 5 CO2 + 5 NADP(+) + 5 CoA + 2 H2O</text>
        <dbReference type="Rhea" id="RHEA:57756"/>
        <dbReference type="Rhea" id="RHEA-COMP:14272"/>
        <dbReference type="Rhea" id="RHEA-COMP:14989"/>
        <dbReference type="ChEBI" id="CHEBI:15377"/>
        <dbReference type="ChEBI" id="CHEBI:15378"/>
        <dbReference type="ChEBI" id="CHEBI:16526"/>
        <dbReference type="ChEBI" id="CHEBI:57287"/>
        <dbReference type="ChEBI" id="CHEBI:57327"/>
        <dbReference type="ChEBI" id="CHEBI:57384"/>
        <dbReference type="ChEBI" id="CHEBI:57783"/>
        <dbReference type="ChEBI" id="CHEBI:58349"/>
        <dbReference type="ChEBI" id="CHEBI:133300"/>
        <dbReference type="ChEBI" id="CHEBI:142259"/>
        <dbReference type="EC" id="2.3.1.292"/>
    </reaction>
</comment>
<comment type="catalytic activity">
    <reaction evidence="6 13">
        <text>19-(4-hydroxyphenyl)nonadecanoyl-[(phenol)carboxyphthiodiolenone synthase] + 2 (S)-methylmalonyl-CoA + 3 malonyl-CoA + 5 NADPH + 10 H(+) = C37-(phenol)carboxyphthiodiolenone-[(phenol)carboxyphthiodiolenone synthase] + 5 CO2 + 5 NADP(+) + 5 CoA + 2 H2O</text>
        <dbReference type="Rhea" id="RHEA:57760"/>
        <dbReference type="Rhea" id="RHEA-COMP:14273"/>
        <dbReference type="Rhea" id="RHEA-COMP:14990"/>
        <dbReference type="ChEBI" id="CHEBI:15377"/>
        <dbReference type="ChEBI" id="CHEBI:15378"/>
        <dbReference type="ChEBI" id="CHEBI:16526"/>
        <dbReference type="ChEBI" id="CHEBI:57287"/>
        <dbReference type="ChEBI" id="CHEBI:57327"/>
        <dbReference type="ChEBI" id="CHEBI:57384"/>
        <dbReference type="ChEBI" id="CHEBI:57783"/>
        <dbReference type="ChEBI" id="CHEBI:58349"/>
        <dbReference type="ChEBI" id="CHEBI:133301"/>
        <dbReference type="ChEBI" id="CHEBI:142260"/>
        <dbReference type="EC" id="2.3.1.292"/>
    </reaction>
</comment>
<comment type="cofactor">
    <cofactor evidence="6">
        <name>NADP(+)</name>
        <dbReference type="ChEBI" id="CHEBI:58349"/>
    </cofactor>
</comment>
<comment type="cofactor">
    <cofactor evidence="9">
        <name>pantetheine 4'-phosphate</name>
        <dbReference type="ChEBI" id="CHEBI:47942"/>
    </cofactor>
    <text evidence="14">Binds 1 phosphopantetheine covalently.</text>
</comment>
<comment type="pathway">
    <text evidence="6">Lipid metabolism; fatty acid biosynthesis.</text>
</comment>
<comment type="subunit">
    <text evidence="11">Homodimer.</text>
</comment>
<comment type="miscellaneous">
    <text evidence="7">Was identified as a high-confidence drug target.</text>
</comment>
<organism>
    <name type="scientific">Mycobacterium tuberculosis (strain ATCC 25618 / H37Rv)</name>
    <dbReference type="NCBI Taxonomy" id="83332"/>
    <lineage>
        <taxon>Bacteria</taxon>
        <taxon>Bacillati</taxon>
        <taxon>Actinomycetota</taxon>
        <taxon>Actinomycetes</taxon>
        <taxon>Mycobacteriales</taxon>
        <taxon>Mycobacteriaceae</taxon>
        <taxon>Mycobacterium</taxon>
        <taxon>Mycobacterium tuberculosis complex</taxon>
    </lineage>
</organism>
<feature type="initiator methionine" description="Removed" evidence="22">
    <location>
        <position position="1"/>
    </location>
</feature>
<feature type="chain" id="PRO_0000406948" description="Phenolphthiocerol/phthiocerol polyketide synthase subunit C">
    <location>
        <begin position="2"/>
        <end position="2188"/>
    </location>
</feature>
<feature type="domain" description="Ketosynthase family 3 (KS3)" evidence="3">
    <location>
        <begin position="34"/>
        <end position="462"/>
    </location>
</feature>
<feature type="domain" description="PKS/mFAS DH" evidence="4">
    <location>
        <begin position="928"/>
        <end position="1223"/>
    </location>
</feature>
<feature type="domain" description="Carrier" evidence="2">
    <location>
        <begin position="2069"/>
        <end position="2145"/>
    </location>
</feature>
<feature type="region of interest" description="Acyltransferase" evidence="1">
    <location>
        <begin position="572"/>
        <end position="890"/>
    </location>
</feature>
<feature type="region of interest" description="Dehydratase" evidence="1">
    <location>
        <begin position="928"/>
        <end position="1093"/>
    </location>
</feature>
<feature type="region of interest" description="N-terminal hotdog fold" evidence="4">
    <location>
        <begin position="928"/>
        <end position="1050"/>
    </location>
</feature>
<feature type="region of interest" description="C-terminal hotdog fold" evidence="4">
    <location>
        <begin position="1067"/>
        <end position="1223"/>
    </location>
</feature>
<feature type="region of interest" description="Enoylreductase" evidence="1">
    <location>
        <begin position="1467"/>
        <end position="1778"/>
    </location>
</feature>
<feature type="region of interest" description="Beta-ketoacyl reductase" evidence="1">
    <location>
        <begin position="1802"/>
        <end position="1981"/>
    </location>
</feature>
<feature type="active site" description="For beta-ketoacyl synthase activity" evidence="3">
    <location>
        <position position="210"/>
    </location>
</feature>
<feature type="active site" description="For beta-ketoacyl synthase activity" evidence="3">
    <location>
        <position position="345"/>
    </location>
</feature>
<feature type="active site" description="For beta-ketoacyl synthase activity" evidence="3">
    <location>
        <position position="384"/>
    </location>
</feature>
<feature type="active site" description="For malonyltransferase activity" evidence="5">
    <location>
        <position position="660"/>
    </location>
</feature>
<feature type="active site" description="Proton acceptor; for dehydratase activity" evidence="4 15">
    <location>
        <position position="959"/>
    </location>
</feature>
<feature type="active site" description="Proton donor; for dehydratase activity" evidence="4">
    <location>
        <position position="1129"/>
    </location>
</feature>
<feature type="binding site" evidence="1">
    <location>
        <begin position="1803"/>
        <end position="1848"/>
    </location>
    <ligand>
        <name>NADP(+)</name>
        <dbReference type="ChEBI" id="CHEBI:58349"/>
    </ligand>
</feature>
<feature type="modified residue" description="N-acetylthreonine" evidence="22">
    <location>
        <position position="2"/>
    </location>
</feature>
<feature type="modified residue" description="O-(pantetheine 4'-phosphoryl)serine" evidence="9">
    <location>
        <position position="2105"/>
    </location>
</feature>
<feature type="mutagenesis site" description="Lack of dehydration reaction." evidence="10">
    <original>H</original>
    <variation>F</variation>
    <location>
        <position position="959"/>
    </location>
</feature>
<feature type="mutagenesis site" description="Lack of phosphopantetheinylation." evidence="9">
    <original>S</original>
    <variation>A</variation>
    <location>
        <position position="2105"/>
    </location>
</feature>
<feature type="helix" evidence="28">
    <location>
        <begin position="546"/>
        <end position="551"/>
    </location>
</feature>
<feature type="strand" evidence="28">
    <location>
        <begin position="571"/>
        <end position="575"/>
    </location>
</feature>
<feature type="turn" evidence="28">
    <location>
        <begin position="583"/>
        <end position="586"/>
    </location>
</feature>
<feature type="helix" evidence="28">
    <location>
        <begin position="587"/>
        <end position="592"/>
    </location>
</feature>
<feature type="helix" evidence="28">
    <location>
        <begin position="594"/>
        <end position="611"/>
    </location>
</feature>
<feature type="helix" evidence="28">
    <location>
        <begin position="615"/>
        <end position="620"/>
    </location>
</feature>
<feature type="helix" evidence="28">
    <location>
        <begin position="628"/>
        <end position="648"/>
    </location>
</feature>
<feature type="strand" evidence="28">
    <location>
        <begin position="654"/>
        <end position="658"/>
    </location>
</feature>
<feature type="helix" evidence="28">
    <location>
        <begin position="660"/>
        <end position="662"/>
    </location>
</feature>
<feature type="helix" evidence="28">
    <location>
        <begin position="663"/>
        <end position="669"/>
    </location>
</feature>
<feature type="helix" evidence="28">
    <location>
        <begin position="675"/>
        <end position="689"/>
    </location>
</feature>
<feature type="helix" evidence="28">
    <location>
        <begin position="690"/>
        <end position="692"/>
    </location>
</feature>
<feature type="strand" evidence="28">
    <location>
        <begin position="697"/>
        <end position="703"/>
    </location>
</feature>
<feature type="helix" evidence="28">
    <location>
        <begin position="705"/>
        <end position="711"/>
    </location>
</feature>
<feature type="turn" evidence="28">
    <location>
        <begin position="712"/>
        <end position="714"/>
    </location>
</feature>
<feature type="strand" evidence="28">
    <location>
        <begin position="719"/>
        <end position="723"/>
    </location>
</feature>
<feature type="strand" evidence="28">
    <location>
        <begin position="725"/>
        <end position="727"/>
    </location>
</feature>
<feature type="strand" evidence="28">
    <location>
        <begin position="729"/>
        <end position="733"/>
    </location>
</feature>
<feature type="helix" evidence="28">
    <location>
        <begin position="735"/>
        <end position="747"/>
    </location>
</feature>
<feature type="strand" evidence="28">
    <location>
        <begin position="752"/>
        <end position="754"/>
    </location>
</feature>
<feature type="helix" evidence="28">
    <location>
        <begin position="764"/>
        <end position="769"/>
    </location>
</feature>
<feature type="helix" evidence="28">
    <location>
        <begin position="770"/>
        <end position="776"/>
    </location>
</feature>
<feature type="turn" evidence="28">
    <location>
        <begin position="777"/>
        <end position="779"/>
    </location>
</feature>
<feature type="strand" evidence="28">
    <location>
        <begin position="789"/>
        <end position="794"/>
    </location>
</feature>
<feature type="turn" evidence="28">
    <location>
        <begin position="795"/>
        <end position="798"/>
    </location>
</feature>
<feature type="strand" evidence="28">
    <location>
        <begin position="801"/>
        <end position="803"/>
    </location>
</feature>
<feature type="helix" evidence="28">
    <location>
        <begin position="809"/>
        <end position="817"/>
    </location>
</feature>
<feature type="helix" evidence="28">
    <location>
        <begin position="822"/>
        <end position="830"/>
    </location>
</feature>
<feature type="strand" evidence="28">
    <location>
        <begin position="835"/>
        <end position="838"/>
    </location>
</feature>
<feature type="strand" evidence="28">
    <location>
        <begin position="840"/>
        <end position="842"/>
    </location>
</feature>
<feature type="helix" evidence="28">
    <location>
        <begin position="846"/>
        <end position="856"/>
    </location>
</feature>
<feature type="helix" evidence="28">
    <location>
        <begin position="859"/>
        <end position="861"/>
    </location>
</feature>
<feature type="strand" evidence="28">
    <location>
        <begin position="863"/>
        <end position="865"/>
    </location>
</feature>
<feature type="turn" evidence="26">
    <location>
        <begin position="929"/>
        <end position="931"/>
    </location>
</feature>
<feature type="strand" evidence="26">
    <location>
        <begin position="933"/>
        <end position="936"/>
    </location>
</feature>
<feature type="turn" evidence="26">
    <location>
        <begin position="938"/>
        <end position="940"/>
    </location>
</feature>
<feature type="strand" evidence="26">
    <location>
        <begin position="943"/>
        <end position="949"/>
    </location>
</feature>
<feature type="helix" evidence="26">
    <location>
        <begin position="956"/>
        <end position="958"/>
    </location>
</feature>
<feature type="strand" evidence="26">
    <location>
        <begin position="959"/>
        <end position="961"/>
    </location>
</feature>
<feature type="strand" evidence="26">
    <location>
        <begin position="964"/>
        <end position="966"/>
    </location>
</feature>
<feature type="helix" evidence="26">
    <location>
        <begin position="969"/>
        <end position="983"/>
    </location>
</feature>
<feature type="strand" evidence="26">
    <location>
        <begin position="987"/>
        <end position="990"/>
    </location>
</feature>
<feature type="strand" evidence="26">
    <location>
        <begin position="992"/>
        <end position="999"/>
    </location>
</feature>
<feature type="strand" evidence="26">
    <location>
        <begin position="1009"/>
        <end position="1017"/>
    </location>
</feature>
<feature type="strand" evidence="26">
    <location>
        <begin position="1019"/>
        <end position="1029"/>
    </location>
</feature>
<feature type="strand" evidence="24">
    <location>
        <begin position="1031"/>
        <end position="1033"/>
    </location>
</feature>
<feature type="strand" evidence="26">
    <location>
        <begin position="1035"/>
        <end position="1045"/>
    </location>
</feature>
<feature type="strand" evidence="26">
    <location>
        <begin position="1067"/>
        <end position="1070"/>
    </location>
</feature>
<feature type="helix" evidence="26">
    <location>
        <begin position="1072"/>
        <end position="1081"/>
    </location>
</feature>
<feature type="strand" evidence="26">
    <location>
        <begin position="1084"/>
        <end position="1086"/>
    </location>
</feature>
<feature type="helix" evidence="26">
    <location>
        <begin position="1088"/>
        <end position="1090"/>
    </location>
</feature>
<feature type="strand" evidence="26">
    <location>
        <begin position="1093"/>
        <end position="1099"/>
    </location>
</feature>
<feature type="strand" evidence="25">
    <location>
        <begin position="1100"/>
        <end position="1102"/>
    </location>
</feature>
<feature type="strand" evidence="26">
    <location>
        <begin position="1104"/>
        <end position="1108"/>
    </location>
</feature>
<feature type="helix" evidence="26">
    <location>
        <begin position="1112"/>
        <end position="1114"/>
    </location>
</feature>
<feature type="turn" evidence="26">
    <location>
        <begin position="1115"/>
        <end position="1117"/>
    </location>
</feature>
<feature type="helix" evidence="24">
    <location>
        <begin position="1118"/>
        <end position="1120"/>
    </location>
</feature>
<feature type="helix" evidence="26">
    <location>
        <begin position="1125"/>
        <end position="1133"/>
    </location>
</feature>
<feature type="helix" evidence="26">
    <location>
        <begin position="1134"/>
        <end position="1137"/>
    </location>
</feature>
<feature type="helix" evidence="26">
    <location>
        <begin position="1139"/>
        <end position="1145"/>
    </location>
</feature>
<feature type="strand" evidence="26">
    <location>
        <begin position="1161"/>
        <end position="1171"/>
    </location>
</feature>
<feature type="helix" evidence="26">
    <location>
        <begin position="1175"/>
        <end position="1177"/>
    </location>
</feature>
<feature type="strand" evidence="26">
    <location>
        <begin position="1180"/>
        <end position="1188"/>
    </location>
</feature>
<feature type="strand" evidence="26">
    <location>
        <begin position="1191"/>
        <end position="1199"/>
    </location>
</feature>
<feature type="strand" evidence="26">
    <location>
        <begin position="1205"/>
        <end position="1216"/>
    </location>
</feature>
<feature type="helix" evidence="23">
    <location>
        <begin position="1572"/>
        <end position="1587"/>
    </location>
</feature>
<feature type="turn" evidence="23">
    <location>
        <begin position="1588"/>
        <end position="1591"/>
    </location>
</feature>
<feature type="strand" evidence="23">
    <location>
        <begin position="1598"/>
        <end position="1601"/>
    </location>
</feature>
<feature type="turn" evidence="23">
    <location>
        <begin position="1602"/>
        <end position="1605"/>
    </location>
</feature>
<feature type="helix" evidence="23">
    <location>
        <begin position="1607"/>
        <end position="1619"/>
    </location>
</feature>
<feature type="strand" evidence="23">
    <location>
        <begin position="1622"/>
        <end position="1629"/>
    </location>
</feature>
<feature type="helix" evidence="23">
    <location>
        <begin position="1630"/>
        <end position="1638"/>
    </location>
</feature>
<feature type="strand" evidence="23">
    <location>
        <begin position="1642"/>
        <end position="1646"/>
    </location>
</feature>
<feature type="helix" evidence="23">
    <location>
        <begin position="1652"/>
        <end position="1659"/>
    </location>
</feature>
<feature type="turn" evidence="23">
    <location>
        <begin position="1660"/>
        <end position="1662"/>
    </location>
</feature>
<feature type="strand" evidence="23">
    <location>
        <begin position="1665"/>
        <end position="1670"/>
    </location>
</feature>
<feature type="helix" evidence="23">
    <location>
        <begin position="1675"/>
        <end position="1682"/>
    </location>
</feature>
<feature type="strand" evidence="23">
    <location>
        <begin position="1684"/>
        <end position="1692"/>
    </location>
</feature>
<feature type="helix" evidence="23">
    <location>
        <begin position="1696"/>
        <end position="1699"/>
    </location>
</feature>
<feature type="strand" evidence="23">
    <location>
        <begin position="1703"/>
        <end position="1705"/>
    </location>
</feature>
<feature type="helix" evidence="23">
    <location>
        <begin position="1706"/>
        <end position="1709"/>
    </location>
</feature>
<feature type="turn" evidence="23">
    <location>
        <begin position="1710"/>
        <end position="1712"/>
    </location>
</feature>
<feature type="strand" evidence="23">
    <location>
        <begin position="1714"/>
        <end position="1717"/>
    </location>
</feature>
<feature type="helix" evidence="23">
    <location>
        <begin position="1720"/>
        <end position="1726"/>
    </location>
</feature>
<feature type="helix" evidence="23">
    <location>
        <begin position="1728"/>
        <end position="1743"/>
    </location>
</feature>
<feature type="turn" evidence="29">
    <location>
        <begin position="2063"/>
        <end position="2065"/>
    </location>
</feature>
<feature type="strand" evidence="29">
    <location>
        <begin position="2067"/>
        <end position="2069"/>
    </location>
</feature>
<feature type="helix" evidence="27">
    <location>
        <begin position="2073"/>
        <end position="2086"/>
    </location>
</feature>
<feature type="helix" evidence="27">
    <location>
        <begin position="2098"/>
        <end position="2101"/>
    </location>
</feature>
<feature type="helix" evidence="27">
    <location>
        <begin position="2105"/>
        <end position="2119"/>
    </location>
</feature>
<feature type="helix" evidence="27">
    <location>
        <begin position="2127"/>
        <end position="2130"/>
    </location>
</feature>
<feature type="helix" evidence="27">
    <location>
        <begin position="2134"/>
        <end position="2144"/>
    </location>
</feature>
<evidence type="ECO:0000250" key="1"/>
<evidence type="ECO:0000255" key="2">
    <source>
        <dbReference type="PROSITE-ProRule" id="PRU00258"/>
    </source>
</evidence>
<evidence type="ECO:0000255" key="3">
    <source>
        <dbReference type="PROSITE-ProRule" id="PRU01348"/>
    </source>
</evidence>
<evidence type="ECO:0000255" key="4">
    <source>
        <dbReference type="PROSITE-ProRule" id="PRU01363"/>
    </source>
</evidence>
<evidence type="ECO:0000255" key="5">
    <source>
        <dbReference type="PROSITE-ProRule" id="PRU10022"/>
    </source>
</evidence>
<evidence type="ECO:0000269" key="6">
    <source>
    </source>
</evidence>
<evidence type="ECO:0000269" key="7">
    <source>
    </source>
</evidence>
<evidence type="ECO:0000269" key="8">
    <source>
    </source>
</evidence>
<evidence type="ECO:0000269" key="9">
    <source>
    </source>
</evidence>
<evidence type="ECO:0000269" key="10">
    <source>
    </source>
</evidence>
<evidence type="ECO:0000269" key="11">
    <source ref="7"/>
</evidence>
<evidence type="ECO:0000305" key="12"/>
<evidence type="ECO:0000305" key="13">
    <source>
    </source>
</evidence>
<evidence type="ECO:0000305" key="14">
    <source>
    </source>
</evidence>
<evidence type="ECO:0000305" key="15">
    <source>
    </source>
</evidence>
<evidence type="ECO:0007744" key="16">
    <source>
        <dbReference type="PDB" id="1PQW"/>
    </source>
</evidence>
<evidence type="ECO:0007744" key="17">
    <source>
        <dbReference type="PDB" id="4OKI"/>
    </source>
</evidence>
<evidence type="ECO:0007744" key="18">
    <source>
        <dbReference type="PDB" id="4OOC"/>
    </source>
</evidence>
<evidence type="ECO:0007744" key="19">
    <source>
        <dbReference type="PDB" id="5I0K"/>
    </source>
</evidence>
<evidence type="ECO:0007744" key="20">
    <source>
        <dbReference type="PDB" id="5L84"/>
    </source>
</evidence>
<evidence type="ECO:0007744" key="21">
    <source>
        <dbReference type="PDB" id="5NJI"/>
    </source>
</evidence>
<evidence type="ECO:0007744" key="22">
    <source>
    </source>
</evidence>
<evidence type="ECO:0007829" key="23">
    <source>
        <dbReference type="PDB" id="4OKI"/>
    </source>
</evidence>
<evidence type="ECO:0007829" key="24">
    <source>
        <dbReference type="PDB" id="4OOC"/>
    </source>
</evidence>
<evidence type="ECO:0007829" key="25">
    <source>
        <dbReference type="PDB" id="5L84"/>
    </source>
</evidence>
<evidence type="ECO:0007829" key="26">
    <source>
        <dbReference type="PDB" id="5NJI"/>
    </source>
</evidence>
<evidence type="ECO:0007829" key="27">
    <source>
        <dbReference type="PDB" id="6RCX"/>
    </source>
</evidence>
<evidence type="ECO:0007829" key="28">
    <source>
        <dbReference type="PDB" id="7AHB"/>
    </source>
</evidence>
<evidence type="ECO:0007829" key="29">
    <source>
        <dbReference type="PDB" id="8QZI"/>
    </source>
</evidence>
<accession>P96202</accession>
<accession>L0TBB0</accession>